<reference key="1">
    <citation type="journal article" date="1987" name="Aust. J. Biol. Sci.">
        <title>The isolation and characterisation of the ovine growth hormone gene.</title>
        <authorList>
            <person name="Byrne C.R."/>
            <person name="Wilson B.W."/>
            <person name="Ward K.A."/>
        </authorList>
    </citation>
    <scope>NUCLEOTIDE SEQUENCE [GENOMIC DNA]</scope>
</reference>
<reference key="2">
    <citation type="journal article" date="1988" name="Nucleic Acids Res.">
        <title>Cloning and sequencing of the ovine growth hormone gene.</title>
        <authorList>
            <person name="Orian J.M."/>
            <person name="O'Mahoney J.V."/>
            <person name="Brandon M.R."/>
        </authorList>
    </citation>
    <scope>NUCLEOTIDE SEQUENCE [GENOMIC DNA]</scope>
</reference>
<reference key="3">
    <citation type="journal article" date="1989" name="Biochim. Biophys. Acta">
        <title>Cloning, sequence and expression in Escherichia coli of cDNA for ovine pregrowth hormone.</title>
        <authorList>
            <person name="Warwick J.M."/>
            <person name="Wallis O.C."/>
            <person name="Wallis M."/>
        </authorList>
    </citation>
    <scope>NUCLEOTIDE SEQUENCE [MRNA]</scope>
</reference>
<reference key="4">
    <citation type="journal article" date="1992" name="Indian J. Exp. Biol.">
        <title>Cloning and nucleotide sequencing of sheep growth hormone cDNA.</title>
        <authorList>
            <person name="Guron C."/>
            <person name="Rao K.B."/>
            <person name="Jain S.K."/>
            <person name="Totey S.M."/>
            <person name="Talwar G.P."/>
        </authorList>
    </citation>
    <scope>NUCLEOTIDE SEQUENCE [MRNA]</scope>
    <source>
        <tissue>Pituitary</tissue>
    </source>
</reference>
<reference key="5">
    <citation type="journal article" date="1997" name="Mamm. Genome">
        <title>Ovine growth hormone gene duplication -- structural and evolutionary implications.</title>
        <authorList>
            <person name="Ofir R."/>
            <person name="Gootwine E."/>
        </authorList>
    </citation>
    <scope>NUCLEOTIDE SEQUENCE [GENOMIC DNA]</scope>
    <source>
        <strain>Awassi</strain>
    </source>
</reference>
<reference key="6">
    <citation type="journal article" date="1973" name="Arch. Biochem. Biophys.">
        <title>The primary structure of sheep pituitary growth hormone.</title>
        <authorList>
            <person name="Li C.H."/>
            <person name="Gordon D."/>
            <person name="Knorr J."/>
        </authorList>
    </citation>
    <scope>PROTEIN SEQUENCE OF 28-217</scope>
</reference>
<reference key="7">
    <citation type="journal article" date="1972" name="Biochem. Biophys. Res. Commun.">
        <title>Ovine growth hormone. Sequence of the C-terminal 68 amino acids.</title>
        <authorList>
            <person name="Bellair J.T."/>
        </authorList>
    </citation>
    <scope>PROTEIN SEQUENCE OF 150-217</scope>
</reference>
<accession>P67930</accession>
<accession>P01247</accession>
<accession>P07289</accession>
<accession>Q29404</accession>
<name>SOMA_SHEEP</name>
<proteinExistence type="evidence at protein level"/>
<protein>
    <recommendedName>
        <fullName>Somatotropin</fullName>
    </recommendedName>
    <alternativeName>
        <fullName>Growth hormone</fullName>
    </alternativeName>
</protein>
<dbReference type="EMBL" id="M37310">
    <property type="protein sequence ID" value="AAA31527.1"/>
    <property type="molecule type" value="Genomic_DNA"/>
</dbReference>
<dbReference type="EMBL" id="X12546">
    <property type="protein sequence ID" value="CAA31063.1"/>
    <property type="molecule type" value="Genomic_DNA"/>
</dbReference>
<dbReference type="EMBL" id="X15976">
    <property type="protein sequence ID" value="CAA34098.1"/>
    <property type="molecule type" value="mRNA"/>
</dbReference>
<dbReference type="EMBL" id="S50877">
    <property type="protein sequence ID" value="AAB24467.2"/>
    <property type="molecule type" value="mRNA"/>
</dbReference>
<dbReference type="EMBL" id="AF002113">
    <property type="protein sequence ID" value="AAB63273.1"/>
    <property type="molecule type" value="Genomic_DNA"/>
</dbReference>
<dbReference type="EMBL" id="AF002111">
    <property type="protein sequence ID" value="AAB63273.1"/>
    <property type="status" value="JOINED"/>
    <property type="molecule type" value="Genomic_DNA"/>
</dbReference>
<dbReference type="EMBL" id="AF002112">
    <property type="protein sequence ID" value="AAB63273.1"/>
    <property type="status" value="JOINED"/>
    <property type="molecule type" value="Genomic_DNA"/>
</dbReference>
<dbReference type="PIR" id="S02225">
    <property type="entry name" value="STSH"/>
</dbReference>
<dbReference type="RefSeq" id="NP_001009315.2">
    <property type="nucleotide sequence ID" value="NM_001009315.3"/>
</dbReference>
<dbReference type="BMRB" id="P67930"/>
<dbReference type="SMR" id="P67930"/>
<dbReference type="STRING" id="9940.ENSOARP00000014952"/>
<dbReference type="MetOSite" id="P67930"/>
<dbReference type="PaxDb" id="9940-ENSOARP00000014952"/>
<dbReference type="GeneID" id="443329"/>
<dbReference type="KEGG" id="oas:443329"/>
<dbReference type="CTD" id="14599"/>
<dbReference type="eggNOG" id="ENOG502R5GJ">
    <property type="taxonomic scope" value="Eukaryota"/>
</dbReference>
<dbReference type="HOGENOM" id="CLU_088274_2_1_1"/>
<dbReference type="OMA" id="VAYCYSE"/>
<dbReference type="OrthoDB" id="9925773at2759"/>
<dbReference type="Proteomes" id="UP000002356">
    <property type="component" value="Chromosome 11"/>
</dbReference>
<dbReference type="Bgee" id="ENSOARG00000013932">
    <property type="expression patterns" value="Expressed in pituitary gland and 36 other cell types or tissues"/>
</dbReference>
<dbReference type="ExpressionAtlas" id="P67930">
    <property type="expression patterns" value="baseline"/>
</dbReference>
<dbReference type="GO" id="GO:0005615">
    <property type="term" value="C:extracellular space"/>
    <property type="evidence" value="ECO:0000250"/>
    <property type="project" value="AgBase"/>
</dbReference>
<dbReference type="GO" id="GO:0008083">
    <property type="term" value="F:growth factor activity"/>
    <property type="evidence" value="ECO:0007669"/>
    <property type="project" value="TreeGrafter"/>
</dbReference>
<dbReference type="GO" id="GO:0005131">
    <property type="term" value="F:growth hormone receptor binding"/>
    <property type="evidence" value="ECO:0007669"/>
    <property type="project" value="InterPro"/>
</dbReference>
<dbReference type="GO" id="GO:0005179">
    <property type="term" value="F:hormone activity"/>
    <property type="evidence" value="ECO:0007669"/>
    <property type="project" value="UniProtKB-KW"/>
</dbReference>
<dbReference type="GO" id="GO:0046872">
    <property type="term" value="F:metal ion binding"/>
    <property type="evidence" value="ECO:0007669"/>
    <property type="project" value="UniProtKB-KW"/>
</dbReference>
<dbReference type="GO" id="GO:0048513">
    <property type="term" value="P:animal organ development"/>
    <property type="evidence" value="ECO:0007669"/>
    <property type="project" value="TreeGrafter"/>
</dbReference>
<dbReference type="GO" id="GO:0055074">
    <property type="term" value="P:calcium ion homeostasis"/>
    <property type="evidence" value="ECO:0000315"/>
    <property type="project" value="AgBase"/>
</dbReference>
<dbReference type="GO" id="GO:0060396">
    <property type="term" value="P:growth hormone receptor signaling pathway"/>
    <property type="evidence" value="ECO:0007669"/>
    <property type="project" value="TreeGrafter"/>
</dbReference>
<dbReference type="GO" id="GO:0042538">
    <property type="term" value="P:hyperosmotic salinity response"/>
    <property type="evidence" value="ECO:0000315"/>
    <property type="project" value="AgBase"/>
</dbReference>
<dbReference type="GO" id="GO:0030073">
    <property type="term" value="P:insulin secretion"/>
    <property type="evidence" value="ECO:0000250"/>
    <property type="project" value="AgBase"/>
</dbReference>
<dbReference type="GO" id="GO:0010960">
    <property type="term" value="P:magnesium ion homeostasis"/>
    <property type="evidence" value="ECO:0000315"/>
    <property type="project" value="AgBase"/>
</dbReference>
<dbReference type="GO" id="GO:0045927">
    <property type="term" value="P:positive regulation of growth"/>
    <property type="evidence" value="ECO:0007669"/>
    <property type="project" value="TreeGrafter"/>
</dbReference>
<dbReference type="GO" id="GO:1903408">
    <property type="term" value="P:positive regulation of P-type sodium:potassium-exchanging transporter activity"/>
    <property type="evidence" value="ECO:0000315"/>
    <property type="project" value="AgBase"/>
</dbReference>
<dbReference type="GO" id="GO:0046427">
    <property type="term" value="P:positive regulation of receptor signaling pathway via JAK-STAT"/>
    <property type="evidence" value="ECO:0007669"/>
    <property type="project" value="TreeGrafter"/>
</dbReference>
<dbReference type="GO" id="GO:0032930">
    <property type="term" value="P:positive regulation of superoxide anion generation"/>
    <property type="evidence" value="ECO:0000315"/>
    <property type="project" value="AgBase"/>
</dbReference>
<dbReference type="GO" id="GO:0031667">
    <property type="term" value="P:response to nutrient levels"/>
    <property type="evidence" value="ECO:0007669"/>
    <property type="project" value="TreeGrafter"/>
</dbReference>
<dbReference type="GO" id="GO:0055078">
    <property type="term" value="P:sodium ion homeostasis"/>
    <property type="evidence" value="ECO:0000315"/>
    <property type="project" value="AgBase"/>
</dbReference>
<dbReference type="CDD" id="cd10285">
    <property type="entry name" value="somatotropin_like"/>
    <property type="match status" value="1"/>
</dbReference>
<dbReference type="FunFam" id="1.20.1250.10:FF:000002">
    <property type="entry name" value="Growth hormone"/>
    <property type="match status" value="1"/>
</dbReference>
<dbReference type="Gene3D" id="1.20.1250.10">
    <property type="match status" value="1"/>
</dbReference>
<dbReference type="InterPro" id="IPR009079">
    <property type="entry name" value="4_helix_cytokine-like_core"/>
</dbReference>
<dbReference type="InterPro" id="IPR034975">
    <property type="entry name" value="Somatotropin"/>
</dbReference>
<dbReference type="InterPro" id="IPR001400">
    <property type="entry name" value="Somatotropin/Prolactin"/>
</dbReference>
<dbReference type="InterPro" id="IPR018116">
    <property type="entry name" value="Somatotropin_CS"/>
</dbReference>
<dbReference type="PANTHER" id="PTHR11417:SF2">
    <property type="entry name" value="SOMATOTROPIN"/>
    <property type="match status" value="1"/>
</dbReference>
<dbReference type="PANTHER" id="PTHR11417">
    <property type="entry name" value="SOMATOTROPIN,PROLACTIN"/>
    <property type="match status" value="1"/>
</dbReference>
<dbReference type="Pfam" id="PF00103">
    <property type="entry name" value="Hormone_1"/>
    <property type="match status" value="1"/>
</dbReference>
<dbReference type="PRINTS" id="PR00836">
    <property type="entry name" value="SOMATOTROPIN"/>
</dbReference>
<dbReference type="SUPFAM" id="SSF47266">
    <property type="entry name" value="4-helical cytokines"/>
    <property type="match status" value="1"/>
</dbReference>
<dbReference type="PROSITE" id="PS00266">
    <property type="entry name" value="SOMATOTROPIN_1"/>
    <property type="match status" value="1"/>
</dbReference>
<dbReference type="PROSITE" id="PS00338">
    <property type="entry name" value="SOMATOTROPIN_2"/>
    <property type="match status" value="1"/>
</dbReference>
<sequence>MMAAGPRTSLLLAFTLLCLPWTQVVGAFPAMSLSGLFANAVLRAQHLHQLAADTFKEFERTYIPEGQRYSIQNTQVAFCFSETIPAPTGKNEAQQKSDLELLRISLLLIQSWLGPLQFLSRVFTNSLVFGTSDRVYEKLKDLEEGILALMRELEDVTPRAGQILKQTYDKFDTNMRSDDALLKNYGLLSCFRKDLHKTETYLRVMKCRRFGEASCAF</sequence>
<comment type="function">
    <text>Plays an important role in growth control. Its major role in stimulating body growth is to stimulate the liver and other tissues to secrete IGF1. It stimulates both the differentiation and proliferation of myoblasts. It also stimulates amino acid uptake and protein synthesis in muscle and other tissues.</text>
</comment>
<comment type="subcellular location">
    <subcellularLocation>
        <location>Secreted</location>
    </subcellularLocation>
</comment>
<comment type="similarity">
    <text evidence="4">Belongs to the somatotropin/prolactin family.</text>
</comment>
<feature type="signal peptide" evidence="3">
    <location>
        <begin position="1"/>
        <end position="27"/>
    </location>
</feature>
<feature type="chain" id="PRO_0000033000" description="Somatotropin">
    <location>
        <begin position="28"/>
        <end position="217"/>
    </location>
</feature>
<feature type="binding site" evidence="1">
    <location>
        <position position="46"/>
    </location>
    <ligand>
        <name>Zn(2+)</name>
        <dbReference type="ChEBI" id="CHEBI:29105"/>
    </ligand>
</feature>
<feature type="binding site" evidence="1">
    <location>
        <position position="199"/>
    </location>
    <ligand>
        <name>Zn(2+)</name>
        <dbReference type="ChEBI" id="CHEBI:29105"/>
    </ligand>
</feature>
<feature type="modified residue" description="Phosphoserine" evidence="2">
    <location>
        <position position="132"/>
    </location>
</feature>
<feature type="disulfide bond">
    <location>
        <begin position="79"/>
        <end position="190"/>
    </location>
</feature>
<feature type="disulfide bond">
    <location>
        <begin position="207"/>
        <end position="215"/>
    </location>
</feature>
<feature type="sequence conflict" description="In Ref. 1; AAA31527." evidence="4" ref="1">
    <original>G</original>
    <variation>S</variation>
    <location>
        <position position="89"/>
    </location>
</feature>
<feature type="sequence conflict" description="In Ref. 6; AA sequence." evidence="4" ref="6">
    <original>N</original>
    <variation>D</variation>
    <location>
        <position position="125"/>
    </location>
</feature>
<feature type="sequence conflict" description="In Ref. 1; AAA31527." evidence="4" ref="1">
    <original>R</original>
    <variation>L</variation>
    <location>
        <position position="134"/>
    </location>
</feature>
<feature type="sequence conflict" description="In Ref. 4; AAB24467." evidence="4" ref="4">
    <original>T</original>
    <variation>R</variation>
    <location>
        <position position="173"/>
    </location>
</feature>
<organism>
    <name type="scientific">Ovis aries</name>
    <name type="common">Sheep</name>
    <dbReference type="NCBI Taxonomy" id="9940"/>
    <lineage>
        <taxon>Eukaryota</taxon>
        <taxon>Metazoa</taxon>
        <taxon>Chordata</taxon>
        <taxon>Craniata</taxon>
        <taxon>Vertebrata</taxon>
        <taxon>Euteleostomi</taxon>
        <taxon>Mammalia</taxon>
        <taxon>Eutheria</taxon>
        <taxon>Laurasiatheria</taxon>
        <taxon>Artiodactyla</taxon>
        <taxon>Ruminantia</taxon>
        <taxon>Pecora</taxon>
        <taxon>Bovidae</taxon>
        <taxon>Caprinae</taxon>
        <taxon>Ovis</taxon>
    </lineage>
</organism>
<gene>
    <name type="primary">GH1</name>
</gene>
<evidence type="ECO:0000250" key="1"/>
<evidence type="ECO:0000250" key="2">
    <source>
        <dbReference type="UniProtKB" id="P01241"/>
    </source>
</evidence>
<evidence type="ECO:0000269" key="3">
    <source>
    </source>
</evidence>
<evidence type="ECO:0000305" key="4"/>
<keyword id="KW-0903">Direct protein sequencing</keyword>
<keyword id="KW-1015">Disulfide bond</keyword>
<keyword id="KW-0372">Hormone</keyword>
<keyword id="KW-0479">Metal-binding</keyword>
<keyword id="KW-0597">Phosphoprotein</keyword>
<keyword id="KW-1185">Reference proteome</keyword>
<keyword id="KW-0964">Secreted</keyword>
<keyword id="KW-0732">Signal</keyword>
<keyword id="KW-0862">Zinc</keyword>